<organism>
    <name type="scientific">Emericella nidulans (strain FGSC A4 / ATCC 38163 / CBS 112.46 / NRRL 194 / M139)</name>
    <name type="common">Aspergillus nidulans</name>
    <dbReference type="NCBI Taxonomy" id="227321"/>
    <lineage>
        <taxon>Eukaryota</taxon>
        <taxon>Fungi</taxon>
        <taxon>Dikarya</taxon>
        <taxon>Ascomycota</taxon>
        <taxon>Pezizomycotina</taxon>
        <taxon>Eurotiomycetes</taxon>
        <taxon>Eurotiomycetidae</taxon>
        <taxon>Eurotiales</taxon>
        <taxon>Aspergillaceae</taxon>
        <taxon>Aspergillus</taxon>
        <taxon>Aspergillus subgen. Nidulantes</taxon>
    </lineage>
</organism>
<evidence type="ECO:0000250" key="1"/>
<evidence type="ECO:0000255" key="2">
    <source>
        <dbReference type="PROSITE-ProRule" id="PRU00541"/>
    </source>
</evidence>
<evidence type="ECO:0000255" key="3">
    <source>
        <dbReference type="PROSITE-ProRule" id="PRU00542"/>
    </source>
</evidence>
<evidence type="ECO:0000255" key="4">
    <source>
        <dbReference type="PROSITE-ProRule" id="PRU00549"/>
    </source>
</evidence>
<evidence type="ECO:0000256" key="5">
    <source>
        <dbReference type="SAM" id="MobiDB-lite"/>
    </source>
</evidence>
<evidence type="ECO:0000305" key="6"/>
<feature type="chain" id="PRO_0000074368" description="Helicase swr1">
    <location>
        <begin position="1"/>
        <end position="1698"/>
    </location>
</feature>
<feature type="domain" description="HSA" evidence="4">
    <location>
        <begin position="329"/>
        <end position="403"/>
    </location>
</feature>
<feature type="domain" description="Helicase ATP-binding" evidence="2">
    <location>
        <begin position="837"/>
        <end position="1002"/>
    </location>
</feature>
<feature type="domain" description="Helicase C-terminal" evidence="3">
    <location>
        <begin position="1377"/>
        <end position="1527"/>
    </location>
</feature>
<feature type="region of interest" description="Disordered" evidence="5">
    <location>
        <begin position="1"/>
        <end position="249"/>
    </location>
</feature>
<feature type="region of interest" description="Disordered" evidence="5">
    <location>
        <begin position="456"/>
        <end position="682"/>
    </location>
</feature>
<feature type="region of interest" description="Disordered" evidence="5">
    <location>
        <begin position="763"/>
        <end position="818"/>
    </location>
</feature>
<feature type="region of interest" description="Disordered" evidence="5">
    <location>
        <begin position="1586"/>
        <end position="1632"/>
    </location>
</feature>
<feature type="region of interest" description="Disordered" evidence="5">
    <location>
        <begin position="1673"/>
        <end position="1698"/>
    </location>
</feature>
<feature type="short sequence motif" description="DEAH box">
    <location>
        <begin position="953"/>
        <end position="956"/>
    </location>
</feature>
<feature type="compositionally biased region" description="Basic and acidic residues" evidence="5">
    <location>
        <begin position="12"/>
        <end position="21"/>
    </location>
</feature>
<feature type="compositionally biased region" description="Polar residues" evidence="5">
    <location>
        <begin position="28"/>
        <end position="41"/>
    </location>
</feature>
<feature type="compositionally biased region" description="Basic and acidic residues" evidence="5">
    <location>
        <begin position="45"/>
        <end position="59"/>
    </location>
</feature>
<feature type="compositionally biased region" description="Polar residues" evidence="5">
    <location>
        <begin position="120"/>
        <end position="140"/>
    </location>
</feature>
<feature type="compositionally biased region" description="Low complexity" evidence="5">
    <location>
        <begin position="209"/>
        <end position="222"/>
    </location>
</feature>
<feature type="compositionally biased region" description="Acidic residues" evidence="5">
    <location>
        <begin position="468"/>
        <end position="507"/>
    </location>
</feature>
<feature type="compositionally biased region" description="Acidic residues" evidence="5">
    <location>
        <begin position="534"/>
        <end position="545"/>
    </location>
</feature>
<feature type="compositionally biased region" description="Acidic residues" evidence="5">
    <location>
        <begin position="570"/>
        <end position="611"/>
    </location>
</feature>
<feature type="compositionally biased region" description="Polar residues" evidence="5">
    <location>
        <begin position="625"/>
        <end position="642"/>
    </location>
</feature>
<feature type="compositionally biased region" description="Acidic residues" evidence="5">
    <location>
        <begin position="652"/>
        <end position="666"/>
    </location>
</feature>
<feature type="compositionally biased region" description="Polar residues" evidence="5">
    <location>
        <begin position="673"/>
        <end position="682"/>
    </location>
</feature>
<feature type="compositionally biased region" description="Basic and acidic residues" evidence="5">
    <location>
        <begin position="1586"/>
        <end position="1600"/>
    </location>
</feature>
<feature type="compositionally biased region" description="Low complexity" evidence="5">
    <location>
        <begin position="1601"/>
        <end position="1618"/>
    </location>
</feature>
<feature type="compositionally biased region" description="Basic residues" evidence="5">
    <location>
        <begin position="1683"/>
        <end position="1698"/>
    </location>
</feature>
<feature type="binding site" evidence="2">
    <location>
        <begin position="850"/>
        <end position="857"/>
    </location>
    <ligand>
        <name>ATP</name>
        <dbReference type="ChEBI" id="CHEBI:30616"/>
    </ligand>
</feature>
<reference key="1">
    <citation type="journal article" date="2005" name="Nature">
        <title>Sequencing of Aspergillus nidulans and comparative analysis with A. fumigatus and A. oryzae.</title>
        <authorList>
            <person name="Galagan J.E."/>
            <person name="Calvo S.E."/>
            <person name="Cuomo C."/>
            <person name="Ma L.-J."/>
            <person name="Wortman J.R."/>
            <person name="Batzoglou S."/>
            <person name="Lee S.-I."/>
            <person name="Bastuerkmen M."/>
            <person name="Spevak C.C."/>
            <person name="Clutterbuck J."/>
            <person name="Kapitonov V."/>
            <person name="Jurka J."/>
            <person name="Scazzocchio C."/>
            <person name="Farman M.L."/>
            <person name="Butler J."/>
            <person name="Purcell S."/>
            <person name="Harris S."/>
            <person name="Braus G.H."/>
            <person name="Draht O."/>
            <person name="Busch S."/>
            <person name="D'Enfert C."/>
            <person name="Bouchier C."/>
            <person name="Goldman G.H."/>
            <person name="Bell-Pedersen D."/>
            <person name="Griffiths-Jones S."/>
            <person name="Doonan J.H."/>
            <person name="Yu J."/>
            <person name="Vienken K."/>
            <person name="Pain A."/>
            <person name="Freitag M."/>
            <person name="Selker E.U."/>
            <person name="Archer D.B."/>
            <person name="Penalva M.A."/>
            <person name="Oakley B.R."/>
            <person name="Momany M."/>
            <person name="Tanaka T."/>
            <person name="Kumagai T."/>
            <person name="Asai K."/>
            <person name="Machida M."/>
            <person name="Nierman W.C."/>
            <person name="Denning D.W."/>
            <person name="Caddick M.X."/>
            <person name="Hynes M."/>
            <person name="Paoletti M."/>
            <person name="Fischer R."/>
            <person name="Miller B.L."/>
            <person name="Dyer P.S."/>
            <person name="Sachs M.S."/>
            <person name="Osmani S.A."/>
            <person name="Birren B.W."/>
        </authorList>
    </citation>
    <scope>NUCLEOTIDE SEQUENCE [LARGE SCALE GENOMIC DNA]</scope>
    <source>
        <strain>FGSC A4 / ATCC 38163 / CBS 112.46 / NRRL 194 / M139</strain>
    </source>
</reference>
<reference key="2">
    <citation type="journal article" date="2009" name="Fungal Genet. Biol.">
        <title>The 2008 update of the Aspergillus nidulans genome annotation: a community effort.</title>
        <authorList>
            <person name="Wortman J.R."/>
            <person name="Gilsenan J.M."/>
            <person name="Joardar V."/>
            <person name="Deegan J."/>
            <person name="Clutterbuck J."/>
            <person name="Andersen M.R."/>
            <person name="Archer D."/>
            <person name="Bencina M."/>
            <person name="Braus G."/>
            <person name="Coutinho P."/>
            <person name="von Dohren H."/>
            <person name="Doonan J."/>
            <person name="Driessen A.J."/>
            <person name="Durek P."/>
            <person name="Espeso E."/>
            <person name="Fekete E."/>
            <person name="Flipphi M."/>
            <person name="Estrada C.G."/>
            <person name="Geysens S."/>
            <person name="Goldman G."/>
            <person name="de Groot P.W."/>
            <person name="Hansen K."/>
            <person name="Harris S.D."/>
            <person name="Heinekamp T."/>
            <person name="Helmstaedt K."/>
            <person name="Henrissat B."/>
            <person name="Hofmann G."/>
            <person name="Homan T."/>
            <person name="Horio T."/>
            <person name="Horiuchi H."/>
            <person name="James S."/>
            <person name="Jones M."/>
            <person name="Karaffa L."/>
            <person name="Karanyi Z."/>
            <person name="Kato M."/>
            <person name="Keller N."/>
            <person name="Kelly D.E."/>
            <person name="Kiel J.A."/>
            <person name="Kim J.M."/>
            <person name="van der Klei I.J."/>
            <person name="Klis F.M."/>
            <person name="Kovalchuk A."/>
            <person name="Krasevec N."/>
            <person name="Kubicek C.P."/>
            <person name="Liu B."/>
            <person name="Maccabe A."/>
            <person name="Meyer V."/>
            <person name="Mirabito P."/>
            <person name="Miskei M."/>
            <person name="Mos M."/>
            <person name="Mullins J."/>
            <person name="Nelson D.R."/>
            <person name="Nielsen J."/>
            <person name="Oakley B.R."/>
            <person name="Osmani S.A."/>
            <person name="Pakula T."/>
            <person name="Paszewski A."/>
            <person name="Paulsen I."/>
            <person name="Pilsyk S."/>
            <person name="Pocsi I."/>
            <person name="Punt P.J."/>
            <person name="Ram A.F."/>
            <person name="Ren Q."/>
            <person name="Robellet X."/>
            <person name="Robson G."/>
            <person name="Seiboth B."/>
            <person name="van Solingen P."/>
            <person name="Specht T."/>
            <person name="Sun J."/>
            <person name="Taheri-Talesh N."/>
            <person name="Takeshita N."/>
            <person name="Ussery D."/>
            <person name="vanKuyk P.A."/>
            <person name="Visser H."/>
            <person name="van de Vondervoort P.J."/>
            <person name="de Vries R.P."/>
            <person name="Walton J."/>
            <person name="Xiang X."/>
            <person name="Xiong Y."/>
            <person name="Zeng A.P."/>
            <person name="Brandt B.W."/>
            <person name="Cornell M.J."/>
            <person name="van den Hondel C.A."/>
            <person name="Visser J."/>
            <person name="Oliver S.G."/>
            <person name="Turner G."/>
        </authorList>
    </citation>
    <scope>GENOME REANNOTATION</scope>
    <source>
        <strain>FGSC A4 / ATCC 38163 / CBS 112.46 / NRRL 194 / M139</strain>
    </source>
</reference>
<protein>
    <recommendedName>
        <fullName>Helicase swr1</fullName>
        <ecNumber>3.6.4.12</ecNumber>
    </recommendedName>
</protein>
<accession>Q5ARK3</accession>
<accession>C8VH70</accession>
<dbReference type="EC" id="3.6.4.12"/>
<dbReference type="EMBL" id="AACD01000169">
    <property type="protein sequence ID" value="EAA61910.1"/>
    <property type="status" value="ALT_SEQ"/>
    <property type="molecule type" value="Genomic_DNA"/>
</dbReference>
<dbReference type="EMBL" id="BN001306">
    <property type="protein sequence ID" value="CBF82596.1"/>
    <property type="molecule type" value="Genomic_DNA"/>
</dbReference>
<dbReference type="RefSeq" id="XP_682346.1">
    <property type="nucleotide sequence ID" value="XM_677254.1"/>
</dbReference>
<dbReference type="SMR" id="Q5ARK3"/>
<dbReference type="FunCoup" id="Q5ARK3">
    <property type="interactions" value="188"/>
</dbReference>
<dbReference type="STRING" id="227321.Q5ARK3"/>
<dbReference type="EnsemblFungi" id="CBF82596">
    <property type="protein sequence ID" value="CBF82596"/>
    <property type="gene ID" value="ANIA_09077"/>
</dbReference>
<dbReference type="VEuPathDB" id="FungiDB:AN9077"/>
<dbReference type="eggNOG" id="KOG0391">
    <property type="taxonomic scope" value="Eukaryota"/>
</dbReference>
<dbReference type="HOGENOM" id="CLU_000315_24_2_1"/>
<dbReference type="InParanoid" id="Q5ARK3"/>
<dbReference type="OMA" id="KLFAQWC"/>
<dbReference type="OrthoDB" id="372624at2759"/>
<dbReference type="Proteomes" id="UP000000560">
    <property type="component" value="Chromosome VI"/>
</dbReference>
<dbReference type="GO" id="GO:0000812">
    <property type="term" value="C:Swr1 complex"/>
    <property type="evidence" value="ECO:0000318"/>
    <property type="project" value="GO_Central"/>
</dbReference>
<dbReference type="GO" id="GO:0005524">
    <property type="term" value="F:ATP binding"/>
    <property type="evidence" value="ECO:0007669"/>
    <property type="project" value="UniProtKB-KW"/>
</dbReference>
<dbReference type="GO" id="GO:0016887">
    <property type="term" value="F:ATP hydrolysis activity"/>
    <property type="evidence" value="ECO:0000318"/>
    <property type="project" value="GO_Central"/>
</dbReference>
<dbReference type="GO" id="GO:0003677">
    <property type="term" value="F:DNA binding"/>
    <property type="evidence" value="ECO:0007669"/>
    <property type="project" value="UniProtKB-KW"/>
</dbReference>
<dbReference type="GO" id="GO:0004386">
    <property type="term" value="F:helicase activity"/>
    <property type="evidence" value="ECO:0007669"/>
    <property type="project" value="UniProtKB-KW"/>
</dbReference>
<dbReference type="GO" id="GO:0042393">
    <property type="term" value="F:histone binding"/>
    <property type="evidence" value="ECO:0000318"/>
    <property type="project" value="GO_Central"/>
</dbReference>
<dbReference type="GO" id="GO:0006338">
    <property type="term" value="P:chromatin remodeling"/>
    <property type="evidence" value="ECO:0000318"/>
    <property type="project" value="GO_Central"/>
</dbReference>
<dbReference type="CDD" id="cd18003">
    <property type="entry name" value="DEXQc_SRCAP"/>
    <property type="match status" value="1"/>
</dbReference>
<dbReference type="CDD" id="cd18793">
    <property type="entry name" value="SF2_C_SNF"/>
    <property type="match status" value="1"/>
</dbReference>
<dbReference type="FunFam" id="3.40.50.10810:FF:000005">
    <property type="entry name" value="Photoperiod-independent early flowering 1"/>
    <property type="match status" value="1"/>
</dbReference>
<dbReference type="FunFam" id="3.40.50.300:FF:000655">
    <property type="entry name" value="Protein PHOTOPERIOD-INDEPENDENT EARLY FLOWERING 1"/>
    <property type="match status" value="1"/>
</dbReference>
<dbReference type="FunFam" id="1.20.120.850:FF:000009">
    <property type="entry name" value="SNF2 family helicase/ATPase (Swr1)"/>
    <property type="match status" value="1"/>
</dbReference>
<dbReference type="Gene3D" id="3.40.50.300">
    <property type="entry name" value="P-loop containing nucleotide triphosphate hydrolases"/>
    <property type="match status" value="1"/>
</dbReference>
<dbReference type="Gene3D" id="1.20.120.850">
    <property type="entry name" value="SWI2/SNF2 ATPases, N-terminal domain"/>
    <property type="match status" value="1"/>
</dbReference>
<dbReference type="Gene3D" id="3.40.50.10810">
    <property type="entry name" value="Tandem AAA-ATPase domain"/>
    <property type="match status" value="1"/>
</dbReference>
<dbReference type="InterPro" id="IPR002464">
    <property type="entry name" value="DNA/RNA_helicase_DEAH_CS"/>
</dbReference>
<dbReference type="InterPro" id="IPR014001">
    <property type="entry name" value="Helicase_ATP-bd"/>
</dbReference>
<dbReference type="InterPro" id="IPR001650">
    <property type="entry name" value="Helicase_C-like"/>
</dbReference>
<dbReference type="InterPro" id="IPR014012">
    <property type="entry name" value="HSA_dom"/>
</dbReference>
<dbReference type="InterPro" id="IPR050520">
    <property type="entry name" value="INO80/SWR1_helicase"/>
</dbReference>
<dbReference type="InterPro" id="IPR027417">
    <property type="entry name" value="P-loop_NTPase"/>
</dbReference>
<dbReference type="InterPro" id="IPR038718">
    <property type="entry name" value="SNF2-like_sf"/>
</dbReference>
<dbReference type="InterPro" id="IPR049730">
    <property type="entry name" value="SNF2/RAD54-like_C"/>
</dbReference>
<dbReference type="InterPro" id="IPR000330">
    <property type="entry name" value="SNF2_N"/>
</dbReference>
<dbReference type="PANTHER" id="PTHR45685:SF1">
    <property type="entry name" value="HELICASE SRCAP"/>
    <property type="match status" value="1"/>
</dbReference>
<dbReference type="PANTHER" id="PTHR45685">
    <property type="entry name" value="HELICASE SRCAP-RELATED"/>
    <property type="match status" value="1"/>
</dbReference>
<dbReference type="Pfam" id="PF00271">
    <property type="entry name" value="Helicase_C"/>
    <property type="match status" value="1"/>
</dbReference>
<dbReference type="Pfam" id="PF07529">
    <property type="entry name" value="HSA"/>
    <property type="match status" value="1"/>
</dbReference>
<dbReference type="Pfam" id="PF00176">
    <property type="entry name" value="SNF2-rel_dom"/>
    <property type="match status" value="1"/>
</dbReference>
<dbReference type="SMART" id="SM00487">
    <property type="entry name" value="DEXDc"/>
    <property type="match status" value="1"/>
</dbReference>
<dbReference type="SMART" id="SM00490">
    <property type="entry name" value="HELICc"/>
    <property type="match status" value="1"/>
</dbReference>
<dbReference type="SUPFAM" id="SSF52540">
    <property type="entry name" value="P-loop containing nucleoside triphosphate hydrolases"/>
    <property type="match status" value="2"/>
</dbReference>
<dbReference type="PROSITE" id="PS00690">
    <property type="entry name" value="DEAH_ATP_HELICASE"/>
    <property type="match status" value="1"/>
</dbReference>
<dbReference type="PROSITE" id="PS51192">
    <property type="entry name" value="HELICASE_ATP_BIND_1"/>
    <property type="match status" value="1"/>
</dbReference>
<dbReference type="PROSITE" id="PS51194">
    <property type="entry name" value="HELICASE_CTER"/>
    <property type="match status" value="1"/>
</dbReference>
<dbReference type="PROSITE" id="PS51204">
    <property type="entry name" value="HSA"/>
    <property type="match status" value="1"/>
</dbReference>
<gene>
    <name type="primary">swr1</name>
    <name type="ORF">AN9077</name>
</gene>
<comment type="function">
    <text evidence="1">Catalytic component of the SWR1 complex which mediates the ATP-dependent exchange of histone H2A for the H2A variant HZT1 leading to transcriptional regulation of selected genes by chromatin remodeling.</text>
</comment>
<comment type="catalytic activity">
    <reaction>
        <text>ATP + H2O = ADP + phosphate + H(+)</text>
        <dbReference type="Rhea" id="RHEA:13065"/>
        <dbReference type="ChEBI" id="CHEBI:15377"/>
        <dbReference type="ChEBI" id="CHEBI:15378"/>
        <dbReference type="ChEBI" id="CHEBI:30616"/>
        <dbReference type="ChEBI" id="CHEBI:43474"/>
        <dbReference type="ChEBI" id="CHEBI:456216"/>
        <dbReference type="EC" id="3.6.4.12"/>
    </reaction>
</comment>
<comment type="subunit">
    <text evidence="1">Component of the SWR1 chromatin-remodeling complex.</text>
</comment>
<comment type="subcellular location">
    <subcellularLocation>
        <location evidence="4">Nucleus</location>
    </subcellularLocation>
</comment>
<comment type="similarity">
    <text evidence="6">Belongs to the SNF2/RAD54 helicase family. SWR1 subfamily.</text>
</comment>
<comment type="sequence caution" evidence="6">
    <conflict type="erroneous gene model prediction">
        <sequence resource="EMBL-CDS" id="EAA61910"/>
    </conflict>
</comment>
<proteinExistence type="inferred from homology"/>
<sequence>MQNGTTIGIPPENERVTERAEPVPSDLLPNNSPVNSPTIDPTLSEIKDVAADHNEEPPSKRRKVAGSTPSRRSHSRAASPPWKKAGADGPTSKIVDGKRRSTRVSNVGPVEQPPSDAKPTRSSQKQYVSKAVSSQRNAAVSSPLPMSPSRSGINRRSLAGVAVNGSPSTTAKGSIGRRRRESPSPVSKRASTRTRPDNMDAYHPSNGVTPRSNSTKTRSTRSFQLASSDFREETADDIGNDGQDEHGQRIQRLRIKVKKPALSIQHPSHVLPTRKYGSFKEWLENEGTGPGRMLTMTDALEEAQKRRQVTEAMEPGGLLSSEVCSAFLPEPQEELPQQFSHQDHLVAHALYFKKLLDKEHRAHRQAAKSLAAACAEVWRKRNKDPEDILREQQEEMRGKRKQLAKDLKKMFELARAEIDRVRLARWEEEQKAKDQRALDRAIKQSTMLFEKRRLEILGETGSDAPETTTDDEEVETDNGSENDDEEGESNMSTETEEEDGDDRDDDVGLTAEELRLKYANLPDTNPHPDQSPYSDEDSEDSDDIAADNTPGDTSGGVNRSPPPDSSGQVELDEVDPVLIDDSDESTDMDDDMGDSDDDGYSEAESDDEDGGEPGLLGFFSAKDLSLSNLHQTNSGEGDTHQTGADGDRNEDSSFDESEFGSEDPDEVTLVPTGPTNKDLSTPATVTASAELEPAAMTPSIDQTSTEEPIAIGTETPIETVAEDAAALADTEPVDVDVLDTSTNDSVPPVMSPATNLLKQIERQQHEPYHSRAASSEASPGTVATKPSEPESVSSIEAPAEKHAQPSESPGPGLKTPIPHLLRGTLREYQHFGLDWLAGLYSNHINGILADEMGLGKTIQTIALLAHLAVEHGVWGPHLVVVPTSVILNWEMEFKKWCPGFKIMTYYGNQEERRQKRRGWMDDNSWNVLITSYQLVLQDQQVLKRRSWHYMILDEAHNIKNFRSQRWQALLTFRTRARLLLTGTPLQNNLTELWSLLFFLMPTDGDEAGIEGFADLRNFSEWFRRPVEQILEHGRETMDDEAKQVVTKLHTVLRPYILRRLKADVEKQMPGKYEHVVYCRLSKRQRYLYDGFMSRAQTKETLASGNYLSIINCLMQLRKVCNHPDLFETRPISTSFAMPRSVATEFETSEALVRRRLLYQHPLEKLDLDFLNLVPISREDISRRLADDSARIMAYAPFNTLRERQYHRTNWEMKFNGSTVQSTLEALENDCRKRRMAELERSLYFESKRHGRRPVYGSSLIEFLTADSKQRPTAHGPLRKRSYADWLSSQSSVLASMMMSLEERSQAMDGYIQRFACVTPAAVAAGVTEAALTPISTRHLTNKERFPPHDPFHEAQMRLSIAFPDKRLLQYDCGKLQRLDKLLRDLKAGGHRALIFTQMTKMLDVLEQFLNIHGHRYLRLDGTTKVEQRQILTDRFNNDNRILAFILSSRSGGLGINLTGADTVIFYDLDWNPAMDKQCQDRCHRIGQTRDVHIYRFVSEYTIESNILRKANQKRMLDDVVIQEGEFTTDYFTKLDVRDMIGNDEALKDEASAAMDRVLENRVTNTSRVFEQAEDKEDIDAAKNAQKELEHADDGDFDDRANANASGVTAASASASGAGQTPTQAGTPLPDEAQQSLNANNAEVAEDTADSDPSVGHIDDYLLRFMEWNMKDEPLVLPVDKSMKKSKKGKEHRLRKRRR</sequence>
<keyword id="KW-0010">Activator</keyword>
<keyword id="KW-0067">ATP-binding</keyword>
<keyword id="KW-0156">Chromatin regulator</keyword>
<keyword id="KW-0238">DNA-binding</keyword>
<keyword id="KW-0347">Helicase</keyword>
<keyword id="KW-0378">Hydrolase</keyword>
<keyword id="KW-0547">Nucleotide-binding</keyword>
<keyword id="KW-0539">Nucleus</keyword>
<keyword id="KW-1185">Reference proteome</keyword>
<keyword id="KW-0804">Transcription</keyword>
<keyword id="KW-0805">Transcription regulation</keyword>
<name>SWR1_EMENI</name>